<protein>
    <recommendedName>
        <fullName evidence="1">Probable phosphoglycerate mutase GpmB</fullName>
        <ecNumber evidence="1">5.4.2.-</ecNumber>
    </recommendedName>
    <alternativeName>
        <fullName evidence="1">PGAM</fullName>
    </alternativeName>
    <alternativeName>
        <fullName evidence="1">Phosphoglyceromutase</fullName>
    </alternativeName>
</protein>
<keyword id="KW-0324">Glycolysis</keyword>
<keyword id="KW-0413">Isomerase</keyword>
<organism>
    <name type="scientific">Salmonella schwarzengrund (strain CVM19633)</name>
    <dbReference type="NCBI Taxonomy" id="439843"/>
    <lineage>
        <taxon>Bacteria</taxon>
        <taxon>Pseudomonadati</taxon>
        <taxon>Pseudomonadota</taxon>
        <taxon>Gammaproteobacteria</taxon>
        <taxon>Enterobacterales</taxon>
        <taxon>Enterobacteriaceae</taxon>
        <taxon>Salmonella</taxon>
    </lineage>
</organism>
<sequence>MLQVYLVRHGETQWNAERRIQGQSDSPLTAKGEQQAMQVGERARSLGITHIISSDLGRTKRTAEIIAQACGCDITFDSRLRELDMGVLEKRQIDSLTEEEEGWRRQLVNGTQDGRIPGGESMQELSDRVHAALASCLELPQGSRPLLVSHGIALGCLVSTILGLPAWAERRLRLRNCSISRIDYQESQWLASGWVVETAGDVSHLDAPALDELQR</sequence>
<accession>B4TU55</accession>
<name>GPMB_SALSV</name>
<dbReference type="EC" id="5.4.2.-" evidence="1"/>
<dbReference type="EMBL" id="CP001127">
    <property type="protein sequence ID" value="ACF91791.1"/>
    <property type="molecule type" value="Genomic_DNA"/>
</dbReference>
<dbReference type="RefSeq" id="WP_000942363.1">
    <property type="nucleotide sequence ID" value="NC_011094.1"/>
</dbReference>
<dbReference type="SMR" id="B4TU55"/>
<dbReference type="KEGG" id="sew:SeSA_A4836"/>
<dbReference type="HOGENOM" id="CLU_033323_9_5_6"/>
<dbReference type="UniPathway" id="UPA00109">
    <property type="reaction ID" value="UER00186"/>
</dbReference>
<dbReference type="Proteomes" id="UP000001865">
    <property type="component" value="Chromosome"/>
</dbReference>
<dbReference type="GO" id="GO:0005737">
    <property type="term" value="C:cytoplasm"/>
    <property type="evidence" value="ECO:0007669"/>
    <property type="project" value="TreeGrafter"/>
</dbReference>
<dbReference type="GO" id="GO:0016791">
    <property type="term" value="F:phosphatase activity"/>
    <property type="evidence" value="ECO:0007669"/>
    <property type="project" value="TreeGrafter"/>
</dbReference>
<dbReference type="GO" id="GO:0004619">
    <property type="term" value="F:phosphoglycerate mutase activity"/>
    <property type="evidence" value="ECO:0007669"/>
    <property type="project" value="UniProtKB-UniRule"/>
</dbReference>
<dbReference type="GO" id="GO:0006096">
    <property type="term" value="P:glycolytic process"/>
    <property type="evidence" value="ECO:0007669"/>
    <property type="project" value="UniProtKB-UniRule"/>
</dbReference>
<dbReference type="CDD" id="cd07067">
    <property type="entry name" value="HP_PGM_like"/>
    <property type="match status" value="1"/>
</dbReference>
<dbReference type="Gene3D" id="3.40.50.1240">
    <property type="entry name" value="Phosphoglycerate mutase-like"/>
    <property type="match status" value="1"/>
</dbReference>
<dbReference type="HAMAP" id="MF_01040">
    <property type="entry name" value="PGAM_GpmB"/>
    <property type="match status" value="1"/>
</dbReference>
<dbReference type="InterPro" id="IPR013078">
    <property type="entry name" value="His_Pase_superF_clade-1"/>
</dbReference>
<dbReference type="InterPro" id="IPR029033">
    <property type="entry name" value="His_PPase_superfam"/>
</dbReference>
<dbReference type="InterPro" id="IPR001345">
    <property type="entry name" value="PG/BPGM_mutase_AS"/>
</dbReference>
<dbReference type="InterPro" id="IPR050275">
    <property type="entry name" value="PGM_Phosphatase"/>
</dbReference>
<dbReference type="InterPro" id="IPR023086">
    <property type="entry name" value="Phosphoglycerate_mutase_GpmB"/>
</dbReference>
<dbReference type="NCBIfam" id="NF002901">
    <property type="entry name" value="PRK03482.1"/>
    <property type="match status" value="1"/>
</dbReference>
<dbReference type="PANTHER" id="PTHR48100">
    <property type="entry name" value="BROAD-SPECIFICITY PHOSPHATASE YOR283W-RELATED"/>
    <property type="match status" value="1"/>
</dbReference>
<dbReference type="PANTHER" id="PTHR48100:SF1">
    <property type="entry name" value="HISTIDINE PHOSPHATASE FAMILY PROTEIN-RELATED"/>
    <property type="match status" value="1"/>
</dbReference>
<dbReference type="Pfam" id="PF00300">
    <property type="entry name" value="His_Phos_1"/>
    <property type="match status" value="1"/>
</dbReference>
<dbReference type="SMART" id="SM00855">
    <property type="entry name" value="PGAM"/>
    <property type="match status" value="1"/>
</dbReference>
<dbReference type="SUPFAM" id="SSF53254">
    <property type="entry name" value="Phosphoglycerate mutase-like"/>
    <property type="match status" value="1"/>
</dbReference>
<dbReference type="PROSITE" id="PS00175">
    <property type="entry name" value="PG_MUTASE"/>
    <property type="match status" value="1"/>
</dbReference>
<gene>
    <name evidence="1" type="primary">gpmB</name>
    <name type="ordered locus">SeSA_A4836</name>
</gene>
<comment type="catalytic activity">
    <reaction evidence="1">
        <text>(2R)-2-phosphoglycerate = (2R)-3-phosphoglycerate</text>
        <dbReference type="Rhea" id="RHEA:15901"/>
        <dbReference type="ChEBI" id="CHEBI:58272"/>
        <dbReference type="ChEBI" id="CHEBI:58289"/>
    </reaction>
</comment>
<comment type="pathway">
    <text evidence="1">Carbohydrate degradation; glycolysis; pyruvate from D-glyceraldehyde 3-phosphate: step 3/5.</text>
</comment>
<comment type="similarity">
    <text evidence="1">Belongs to the phosphoglycerate mutase family. GpmB subfamily.</text>
</comment>
<reference key="1">
    <citation type="journal article" date="2011" name="J. Bacteriol.">
        <title>Comparative genomics of 28 Salmonella enterica isolates: evidence for CRISPR-mediated adaptive sublineage evolution.</title>
        <authorList>
            <person name="Fricke W.F."/>
            <person name="Mammel M.K."/>
            <person name="McDermott P.F."/>
            <person name="Tartera C."/>
            <person name="White D.G."/>
            <person name="Leclerc J.E."/>
            <person name="Ravel J."/>
            <person name="Cebula T.A."/>
        </authorList>
    </citation>
    <scope>NUCLEOTIDE SEQUENCE [LARGE SCALE GENOMIC DNA]</scope>
    <source>
        <strain>CVM19633</strain>
    </source>
</reference>
<feature type="chain" id="PRO_1000136018" description="Probable phosphoglycerate mutase GpmB">
    <location>
        <begin position="1"/>
        <end position="215"/>
    </location>
</feature>
<feature type="active site" description="Tele-phosphohistidine intermediate" evidence="1">
    <location>
        <position position="9"/>
    </location>
</feature>
<feature type="active site" description="Proton donor/acceptor" evidence="1">
    <location>
        <position position="82"/>
    </location>
</feature>
<feature type="binding site" evidence="1">
    <location>
        <begin position="8"/>
        <end position="15"/>
    </location>
    <ligand>
        <name>substrate</name>
    </ligand>
</feature>
<feature type="binding site" evidence="1">
    <location>
        <begin position="21"/>
        <end position="22"/>
    </location>
    <ligand>
        <name>substrate</name>
    </ligand>
</feature>
<feature type="binding site" evidence="1">
    <location>
        <position position="58"/>
    </location>
    <ligand>
        <name>substrate</name>
    </ligand>
</feature>
<feature type="binding site" evidence="1">
    <location>
        <position position="60"/>
    </location>
    <ligand>
        <name>substrate</name>
    </ligand>
</feature>
<feature type="binding site" evidence="1">
    <location>
        <begin position="82"/>
        <end position="85"/>
    </location>
    <ligand>
        <name>substrate</name>
    </ligand>
</feature>
<feature type="binding site" evidence="1">
    <location>
        <begin position="104"/>
        <end position="105"/>
    </location>
    <ligand>
        <name>substrate</name>
    </ligand>
</feature>
<feature type="binding site" evidence="1">
    <location>
        <begin position="151"/>
        <end position="152"/>
    </location>
    <ligand>
        <name>substrate</name>
    </ligand>
</feature>
<feature type="site" description="Transition state stabilizer" evidence="1">
    <location>
        <position position="150"/>
    </location>
</feature>
<evidence type="ECO:0000255" key="1">
    <source>
        <dbReference type="HAMAP-Rule" id="MF_01040"/>
    </source>
</evidence>
<proteinExistence type="inferred from homology"/>